<dbReference type="EC" id="3.1.-.-" evidence="1"/>
<dbReference type="EMBL" id="CP001022">
    <property type="protein sequence ID" value="ACB60210.1"/>
    <property type="molecule type" value="Genomic_DNA"/>
</dbReference>
<dbReference type="SMR" id="B1YKM7"/>
<dbReference type="STRING" id="262543.Exig_0729"/>
<dbReference type="KEGG" id="esi:Exig_0729"/>
<dbReference type="eggNOG" id="COG3857">
    <property type="taxonomic scope" value="Bacteria"/>
</dbReference>
<dbReference type="HOGENOM" id="CLU_007838_0_0_9"/>
<dbReference type="OrthoDB" id="9758506at2"/>
<dbReference type="Proteomes" id="UP000001681">
    <property type="component" value="Chromosome"/>
</dbReference>
<dbReference type="GO" id="GO:0051539">
    <property type="term" value="F:4 iron, 4 sulfur cluster binding"/>
    <property type="evidence" value="ECO:0007669"/>
    <property type="project" value="UniProtKB-KW"/>
</dbReference>
<dbReference type="GO" id="GO:0008409">
    <property type="term" value="F:5'-3' exonuclease activity"/>
    <property type="evidence" value="ECO:0007669"/>
    <property type="project" value="UniProtKB-UniRule"/>
</dbReference>
<dbReference type="GO" id="GO:0005524">
    <property type="term" value="F:ATP binding"/>
    <property type="evidence" value="ECO:0007669"/>
    <property type="project" value="UniProtKB-UniRule"/>
</dbReference>
<dbReference type="GO" id="GO:0003690">
    <property type="term" value="F:double-stranded DNA binding"/>
    <property type="evidence" value="ECO:0007669"/>
    <property type="project" value="UniProtKB-UniRule"/>
</dbReference>
<dbReference type="GO" id="GO:0004386">
    <property type="term" value="F:helicase activity"/>
    <property type="evidence" value="ECO:0007669"/>
    <property type="project" value="UniProtKB-KW"/>
</dbReference>
<dbReference type="GO" id="GO:0046872">
    <property type="term" value="F:metal ion binding"/>
    <property type="evidence" value="ECO:0007669"/>
    <property type="project" value="UniProtKB-KW"/>
</dbReference>
<dbReference type="GO" id="GO:0000724">
    <property type="term" value="P:double-strand break repair via homologous recombination"/>
    <property type="evidence" value="ECO:0007669"/>
    <property type="project" value="UniProtKB-UniRule"/>
</dbReference>
<dbReference type="Gene3D" id="3.90.320.10">
    <property type="match status" value="1"/>
</dbReference>
<dbReference type="Gene3D" id="6.10.140.1030">
    <property type="match status" value="1"/>
</dbReference>
<dbReference type="Gene3D" id="3.40.50.300">
    <property type="entry name" value="P-loop containing nucleotide triphosphate hydrolases"/>
    <property type="match status" value="3"/>
</dbReference>
<dbReference type="HAMAP" id="MF_01452">
    <property type="entry name" value="AddB_type1"/>
    <property type="match status" value="1"/>
</dbReference>
<dbReference type="InterPro" id="IPR049035">
    <property type="entry name" value="ADDB_N"/>
</dbReference>
<dbReference type="InterPro" id="IPR014140">
    <property type="entry name" value="DNA_helicase_suAddB"/>
</dbReference>
<dbReference type="InterPro" id="IPR014017">
    <property type="entry name" value="DNA_helicase_UvrD-like_C"/>
</dbReference>
<dbReference type="InterPro" id="IPR027417">
    <property type="entry name" value="P-loop_NTPase"/>
</dbReference>
<dbReference type="InterPro" id="IPR011604">
    <property type="entry name" value="PDDEXK-like_dom_sf"/>
</dbReference>
<dbReference type="InterPro" id="IPR038726">
    <property type="entry name" value="PDDEXK_AddAB-type"/>
</dbReference>
<dbReference type="NCBIfam" id="TIGR02773">
    <property type="entry name" value="addB_Gpos"/>
    <property type="match status" value="1"/>
</dbReference>
<dbReference type="PANTHER" id="PTHR30591">
    <property type="entry name" value="RECBCD ENZYME SUBUNIT RECC"/>
    <property type="match status" value="1"/>
</dbReference>
<dbReference type="PANTHER" id="PTHR30591:SF1">
    <property type="entry name" value="RECBCD ENZYME SUBUNIT RECC"/>
    <property type="match status" value="1"/>
</dbReference>
<dbReference type="Pfam" id="PF21445">
    <property type="entry name" value="ADDB_N"/>
    <property type="match status" value="1"/>
</dbReference>
<dbReference type="Pfam" id="PF12705">
    <property type="entry name" value="PDDEXK_1"/>
    <property type="match status" value="1"/>
</dbReference>
<dbReference type="SUPFAM" id="SSF52540">
    <property type="entry name" value="P-loop containing nucleoside triphosphate hydrolases"/>
    <property type="match status" value="1"/>
</dbReference>
<dbReference type="PROSITE" id="PS51198">
    <property type="entry name" value="UVRD_HELICASE_ATP_BIND"/>
    <property type="match status" value="1"/>
</dbReference>
<dbReference type="PROSITE" id="PS51217">
    <property type="entry name" value="UVRD_HELICASE_CTER"/>
    <property type="match status" value="1"/>
</dbReference>
<reference key="1">
    <citation type="submission" date="2008-04" db="EMBL/GenBank/DDBJ databases">
        <title>Complete sequence of chromosome of Exiguobacterium sibiricum 255-15.</title>
        <authorList>
            <consortium name="US DOE Joint Genome Institute"/>
            <person name="Copeland A."/>
            <person name="Lucas S."/>
            <person name="Lapidus A."/>
            <person name="Glavina del Rio T."/>
            <person name="Dalin E."/>
            <person name="Tice H."/>
            <person name="Bruce D."/>
            <person name="Goodwin L."/>
            <person name="Pitluck S."/>
            <person name="Kiss H."/>
            <person name="Chertkov O."/>
            <person name="Monk C."/>
            <person name="Brettin T."/>
            <person name="Detter J.C."/>
            <person name="Han C."/>
            <person name="Kuske C.R."/>
            <person name="Schmutz J."/>
            <person name="Larimer F."/>
            <person name="Land M."/>
            <person name="Hauser L."/>
            <person name="Kyrpides N."/>
            <person name="Mikhailova N."/>
            <person name="Vishnivetskaya T."/>
            <person name="Rodrigues D.F."/>
            <person name="Gilichinsky D."/>
            <person name="Tiedje J."/>
            <person name="Richardson P."/>
        </authorList>
    </citation>
    <scope>NUCLEOTIDE SEQUENCE [LARGE SCALE GENOMIC DNA]</scope>
    <source>
        <strain>DSM 17290 / CCUG 55495 / CIP 109462 / JCM 13490 / 255-15</strain>
    </source>
</reference>
<proteinExistence type="inferred from homology"/>
<sequence>MNYMHLGRAGTGKTTQLIERVIDQLTEQPLGPSIYFIVPDQMSFEMERRIATDPRLSGLVRMEVMSLRRFAFHMIRDYGNQVIPFLDETGTQLLLRQVVEEAEEELKIFKRTKNMPGFYKGLDELIASFKRSLVNPDMLRQISGASPERSPKLNDLALIYERFTERISDKALHADDYFTTLIELLPKADLSDVSVFVDGFYEFSLQEQQVLLRLMELTKDMHLSFTLDVEDVYTKQSEFGVSQRCYMQLIEQMKERQIAHEDIYYGQTVKFQSTGLRMLEQALLSPGYPPTDEEVTGVTVSAAVNRQVETEAAVRKAIQLVRHDGYRFKDIAFLVRHLEPYADHLERAFQLYDIPYFLDQRESMVHHPIVELVHAVLEIVMTGYREESVFRLLKTELIPLPAEDPRLALDRLETFVLERGIKGSMWKKPWQLKRRLADEISLTDAELQEELELNEWRQFLVEAIEPLEKRFKASKTMSEYTRALYRFLEEHHMTDRLTVWKQQALEVNELSQAREHDQVYEAVLLLFEQLEAAAPEATLTTELFVQMVETGLESLRFSLVPPSLDQVIATDYVRGRLQQVKVVFLLGANDGLIPLVEDQSKLLSEGDHDFLHDQGIPVGKASLDVFDDELYYLYQGVTAPSESLHISYALVDEDGKALQPASIVKQIKHQLLQDRPVKTYFAEAGDHAPDDQLQFVTSPERAAAAAAIELRRLQRRYPIQPSWFDVYNRLLENGRGRERMALFSNALFYQNQAEPLPEDLARNLYGDTIKASVSRFETYNACSYKHFARYGLRLKERKLYKFEAPDIGNLFHGALNDLSMNIKASGKRWRELDDQSCSNLAKEAVEKVTPEIQNAILMSSNRFGYIKKKLTDVVEQTAKMLVKQAERSEFEPDLFEISFGNAMFPPLRFTLPDGTEIEFTGRIDRVDQATIGDQLYVRIVDYKSSAKELDFAEIYYGLAIQMLLYLKTVVEQSEVLFNQQAKPAGALYFHVKNPMMRGDLSADEIERNQLLLESYQMQGVIVENDEVLRAMDQIAYDERKKSPLVKVTFTKTGLHKSHTKGVVKEEELTALMDHAWDELKTSSQSMYAGDIAIDPFDYQERTPCTFCEYRSVCQFDQSLGNDYRQLNPLSEKEVLERLKEETE</sequence>
<name>ADDB_EXIS2</name>
<gene>
    <name evidence="1" type="primary">addB</name>
    <name type="ordered locus">Exig_0729</name>
</gene>
<evidence type="ECO:0000255" key="1">
    <source>
        <dbReference type="HAMAP-Rule" id="MF_01452"/>
    </source>
</evidence>
<keyword id="KW-0004">4Fe-4S</keyword>
<keyword id="KW-0067">ATP-binding</keyword>
<keyword id="KW-0227">DNA damage</keyword>
<keyword id="KW-0234">DNA repair</keyword>
<keyword id="KW-0238">DNA-binding</keyword>
<keyword id="KW-0269">Exonuclease</keyword>
<keyword id="KW-0347">Helicase</keyword>
<keyword id="KW-0378">Hydrolase</keyword>
<keyword id="KW-0408">Iron</keyword>
<keyword id="KW-0411">Iron-sulfur</keyword>
<keyword id="KW-0479">Metal-binding</keyword>
<keyword id="KW-0540">Nuclease</keyword>
<keyword id="KW-0547">Nucleotide-binding</keyword>
<keyword id="KW-1185">Reference proteome</keyword>
<comment type="function">
    <text evidence="1">The heterodimer acts as both an ATP-dependent DNA helicase and an ATP-dependent, dual-direction single-stranded exonuclease. Recognizes the chi site generating a DNA molecule suitable for the initiation of homologous recombination. The AddB subunit has 5' -&gt; 3' nuclease activity but not helicase activity.</text>
</comment>
<comment type="cofactor">
    <cofactor evidence="1">
        <name>Mg(2+)</name>
        <dbReference type="ChEBI" id="CHEBI:18420"/>
    </cofactor>
</comment>
<comment type="cofactor">
    <cofactor evidence="1">
        <name>[4Fe-4S] cluster</name>
        <dbReference type="ChEBI" id="CHEBI:49883"/>
    </cofactor>
    <text evidence="1">Binds 1 [4Fe-4S] cluster.</text>
</comment>
<comment type="subunit">
    <text evidence="1">Heterodimer of AddA and AddB.</text>
</comment>
<comment type="miscellaneous">
    <text evidence="1">Despite having conserved helicase domains, this subunit does not have helicase activity.</text>
</comment>
<comment type="similarity">
    <text evidence="1">Belongs to the helicase family. AddB/RexB type 1 subfamily.</text>
</comment>
<organism>
    <name type="scientific">Exiguobacterium sibiricum (strain DSM 17290 / CCUG 55495 / CIP 109462 / JCM 13490 / 255-15)</name>
    <dbReference type="NCBI Taxonomy" id="262543"/>
    <lineage>
        <taxon>Bacteria</taxon>
        <taxon>Bacillati</taxon>
        <taxon>Bacillota</taxon>
        <taxon>Bacilli</taxon>
        <taxon>Bacillales</taxon>
        <taxon>Bacillales Family XII. Incertae Sedis</taxon>
        <taxon>Exiguobacterium</taxon>
    </lineage>
</organism>
<accession>B1YKM7</accession>
<feature type="chain" id="PRO_0000379190" description="ATP-dependent helicase/deoxyribonuclease subunit B">
    <location>
        <begin position="1"/>
        <end position="1143"/>
    </location>
</feature>
<feature type="domain" description="UvrD-like helicase ATP-binding" evidence="1">
    <location>
        <begin position="1"/>
        <end position="274"/>
    </location>
</feature>
<feature type="domain" description="UvrD-like helicase C-terminal" evidence="1">
    <location>
        <begin position="267"/>
        <end position="565"/>
    </location>
</feature>
<feature type="binding site" evidence="1">
    <location>
        <begin position="7"/>
        <end position="14"/>
    </location>
    <ligand>
        <name>ATP</name>
        <dbReference type="ChEBI" id="CHEBI:30616"/>
    </ligand>
</feature>
<feature type="binding site" evidence="1">
    <location>
        <position position="782"/>
    </location>
    <ligand>
        <name>[4Fe-4S] cluster</name>
        <dbReference type="ChEBI" id="CHEBI:49883"/>
    </ligand>
</feature>
<feature type="binding site" evidence="1">
    <location>
        <position position="1104"/>
    </location>
    <ligand>
        <name>[4Fe-4S] cluster</name>
        <dbReference type="ChEBI" id="CHEBI:49883"/>
    </ligand>
</feature>
<feature type="binding site" evidence="1">
    <location>
        <position position="1107"/>
    </location>
    <ligand>
        <name>[4Fe-4S] cluster</name>
        <dbReference type="ChEBI" id="CHEBI:49883"/>
    </ligand>
</feature>
<feature type="binding site" evidence="1">
    <location>
        <position position="1113"/>
    </location>
    <ligand>
        <name>[4Fe-4S] cluster</name>
        <dbReference type="ChEBI" id="CHEBI:49883"/>
    </ligand>
</feature>
<protein>
    <recommendedName>
        <fullName evidence="1">ATP-dependent helicase/deoxyribonuclease subunit B</fullName>
        <ecNumber evidence="1">3.1.-.-</ecNumber>
    </recommendedName>
    <alternativeName>
        <fullName evidence="1">ATP-dependent helicase/nuclease subunit AddB</fullName>
    </alternativeName>
</protein>